<evidence type="ECO:0000255" key="1">
    <source>
        <dbReference type="HAMAP-Rule" id="MF_00412"/>
    </source>
</evidence>
<feature type="chain" id="PRO_0000340901" description="Gamma-glutamyl phosphate reductase">
    <location>
        <begin position="1"/>
        <end position="423"/>
    </location>
</feature>
<organism>
    <name type="scientific">Paracoccus denitrificans (strain Pd 1222)</name>
    <dbReference type="NCBI Taxonomy" id="318586"/>
    <lineage>
        <taxon>Bacteria</taxon>
        <taxon>Pseudomonadati</taxon>
        <taxon>Pseudomonadota</taxon>
        <taxon>Alphaproteobacteria</taxon>
        <taxon>Rhodobacterales</taxon>
        <taxon>Paracoccaceae</taxon>
        <taxon>Paracoccus</taxon>
    </lineage>
</organism>
<gene>
    <name evidence="1" type="primary">proA</name>
    <name type="ordered locus">Pden_4503</name>
</gene>
<reference key="1">
    <citation type="submission" date="2006-12" db="EMBL/GenBank/DDBJ databases">
        <title>Complete sequence of chromosome 2 of Paracoccus denitrificans PD1222.</title>
        <authorList>
            <person name="Copeland A."/>
            <person name="Lucas S."/>
            <person name="Lapidus A."/>
            <person name="Barry K."/>
            <person name="Detter J.C."/>
            <person name="Glavina del Rio T."/>
            <person name="Hammon N."/>
            <person name="Israni S."/>
            <person name="Dalin E."/>
            <person name="Tice H."/>
            <person name="Pitluck S."/>
            <person name="Munk A.C."/>
            <person name="Brettin T."/>
            <person name="Bruce D."/>
            <person name="Han C."/>
            <person name="Tapia R."/>
            <person name="Gilna P."/>
            <person name="Schmutz J."/>
            <person name="Larimer F."/>
            <person name="Land M."/>
            <person name="Hauser L."/>
            <person name="Kyrpides N."/>
            <person name="Lykidis A."/>
            <person name="Spiro S."/>
            <person name="Richardson D.J."/>
            <person name="Moir J.W.B."/>
            <person name="Ferguson S.J."/>
            <person name="van Spanning R.J.M."/>
            <person name="Richardson P."/>
        </authorList>
    </citation>
    <scope>NUCLEOTIDE SEQUENCE [LARGE SCALE GENOMIC DNA]</scope>
    <source>
        <strain>Pd 1222</strain>
    </source>
</reference>
<protein>
    <recommendedName>
        <fullName evidence="1">Gamma-glutamyl phosphate reductase</fullName>
        <shortName evidence="1">GPR</shortName>
        <ecNumber evidence="1">1.2.1.41</ecNumber>
    </recommendedName>
    <alternativeName>
        <fullName evidence="1">Glutamate-5-semialdehyde dehydrogenase</fullName>
    </alternativeName>
    <alternativeName>
        <fullName evidence="1">Glutamyl-gamma-semialdehyde dehydrogenase</fullName>
        <shortName evidence="1">GSA dehydrogenase</shortName>
    </alternativeName>
</protein>
<keyword id="KW-0028">Amino-acid biosynthesis</keyword>
<keyword id="KW-0963">Cytoplasm</keyword>
<keyword id="KW-0521">NADP</keyword>
<keyword id="KW-0560">Oxidoreductase</keyword>
<keyword id="KW-0641">Proline biosynthesis</keyword>
<keyword id="KW-1185">Reference proteome</keyword>
<dbReference type="EC" id="1.2.1.41" evidence="1"/>
<dbReference type="EMBL" id="CP000490">
    <property type="protein sequence ID" value="ABL72567.1"/>
    <property type="molecule type" value="Genomic_DNA"/>
</dbReference>
<dbReference type="RefSeq" id="WP_011750728.1">
    <property type="nucleotide sequence ID" value="NC_008687.1"/>
</dbReference>
<dbReference type="SMR" id="A1BAM3"/>
<dbReference type="STRING" id="318586.Pden_4503"/>
<dbReference type="EnsemblBacteria" id="ABL72567">
    <property type="protein sequence ID" value="ABL72567"/>
    <property type="gene ID" value="Pden_4503"/>
</dbReference>
<dbReference type="GeneID" id="93454170"/>
<dbReference type="KEGG" id="pde:Pden_4503"/>
<dbReference type="eggNOG" id="COG0014">
    <property type="taxonomic scope" value="Bacteria"/>
</dbReference>
<dbReference type="HOGENOM" id="CLU_030231_0_0_5"/>
<dbReference type="OrthoDB" id="9809970at2"/>
<dbReference type="UniPathway" id="UPA00098">
    <property type="reaction ID" value="UER00360"/>
</dbReference>
<dbReference type="Proteomes" id="UP000000361">
    <property type="component" value="Chromosome 2"/>
</dbReference>
<dbReference type="GO" id="GO:0005737">
    <property type="term" value="C:cytoplasm"/>
    <property type="evidence" value="ECO:0007669"/>
    <property type="project" value="UniProtKB-SubCell"/>
</dbReference>
<dbReference type="GO" id="GO:0004350">
    <property type="term" value="F:glutamate-5-semialdehyde dehydrogenase activity"/>
    <property type="evidence" value="ECO:0007669"/>
    <property type="project" value="UniProtKB-UniRule"/>
</dbReference>
<dbReference type="GO" id="GO:0050661">
    <property type="term" value="F:NADP binding"/>
    <property type="evidence" value="ECO:0007669"/>
    <property type="project" value="InterPro"/>
</dbReference>
<dbReference type="GO" id="GO:0055129">
    <property type="term" value="P:L-proline biosynthetic process"/>
    <property type="evidence" value="ECO:0007669"/>
    <property type="project" value="UniProtKB-UniRule"/>
</dbReference>
<dbReference type="CDD" id="cd07079">
    <property type="entry name" value="ALDH_F18-19_ProA-GPR"/>
    <property type="match status" value="1"/>
</dbReference>
<dbReference type="Gene3D" id="3.40.605.10">
    <property type="entry name" value="Aldehyde Dehydrogenase, Chain A, domain 1"/>
    <property type="match status" value="1"/>
</dbReference>
<dbReference type="Gene3D" id="3.40.309.10">
    <property type="entry name" value="Aldehyde Dehydrogenase, Chain A, domain 2"/>
    <property type="match status" value="1"/>
</dbReference>
<dbReference type="HAMAP" id="MF_00412">
    <property type="entry name" value="ProA"/>
    <property type="match status" value="1"/>
</dbReference>
<dbReference type="InterPro" id="IPR016161">
    <property type="entry name" value="Ald_DH/histidinol_DH"/>
</dbReference>
<dbReference type="InterPro" id="IPR016163">
    <property type="entry name" value="Ald_DH_C"/>
</dbReference>
<dbReference type="InterPro" id="IPR016162">
    <property type="entry name" value="Ald_DH_N"/>
</dbReference>
<dbReference type="InterPro" id="IPR015590">
    <property type="entry name" value="Aldehyde_DH_dom"/>
</dbReference>
<dbReference type="InterPro" id="IPR020593">
    <property type="entry name" value="G-glutamylP_reductase_CS"/>
</dbReference>
<dbReference type="InterPro" id="IPR012134">
    <property type="entry name" value="Glu-5-SA_DH"/>
</dbReference>
<dbReference type="InterPro" id="IPR000965">
    <property type="entry name" value="GPR_dom"/>
</dbReference>
<dbReference type="NCBIfam" id="NF001221">
    <property type="entry name" value="PRK00197.1"/>
    <property type="match status" value="1"/>
</dbReference>
<dbReference type="NCBIfam" id="TIGR00407">
    <property type="entry name" value="proA"/>
    <property type="match status" value="1"/>
</dbReference>
<dbReference type="PANTHER" id="PTHR11063:SF8">
    <property type="entry name" value="DELTA-1-PYRROLINE-5-CARBOXYLATE SYNTHASE"/>
    <property type="match status" value="1"/>
</dbReference>
<dbReference type="PANTHER" id="PTHR11063">
    <property type="entry name" value="GLUTAMATE SEMIALDEHYDE DEHYDROGENASE"/>
    <property type="match status" value="1"/>
</dbReference>
<dbReference type="Pfam" id="PF00171">
    <property type="entry name" value="Aldedh"/>
    <property type="match status" value="1"/>
</dbReference>
<dbReference type="PIRSF" id="PIRSF000151">
    <property type="entry name" value="GPR"/>
    <property type="match status" value="1"/>
</dbReference>
<dbReference type="SUPFAM" id="SSF53720">
    <property type="entry name" value="ALDH-like"/>
    <property type="match status" value="1"/>
</dbReference>
<dbReference type="PROSITE" id="PS01223">
    <property type="entry name" value="PROA"/>
    <property type="match status" value="1"/>
</dbReference>
<accession>A1BAM3</accession>
<comment type="function">
    <text evidence="1">Catalyzes the NADPH-dependent reduction of L-glutamate 5-phosphate into L-glutamate 5-semialdehyde and phosphate. The product spontaneously undergoes cyclization to form 1-pyrroline-5-carboxylate.</text>
</comment>
<comment type="catalytic activity">
    <reaction evidence="1">
        <text>L-glutamate 5-semialdehyde + phosphate + NADP(+) = L-glutamyl 5-phosphate + NADPH + H(+)</text>
        <dbReference type="Rhea" id="RHEA:19541"/>
        <dbReference type="ChEBI" id="CHEBI:15378"/>
        <dbReference type="ChEBI" id="CHEBI:43474"/>
        <dbReference type="ChEBI" id="CHEBI:57783"/>
        <dbReference type="ChEBI" id="CHEBI:58066"/>
        <dbReference type="ChEBI" id="CHEBI:58274"/>
        <dbReference type="ChEBI" id="CHEBI:58349"/>
        <dbReference type="EC" id="1.2.1.41"/>
    </reaction>
</comment>
<comment type="pathway">
    <text evidence="1">Amino-acid biosynthesis; L-proline biosynthesis; L-glutamate 5-semialdehyde from L-glutamate: step 2/2.</text>
</comment>
<comment type="subcellular location">
    <subcellularLocation>
        <location evidence="1">Cytoplasm</location>
    </subcellularLocation>
</comment>
<comment type="similarity">
    <text evidence="1">Belongs to the gamma-glutamyl phosphate reductase family.</text>
</comment>
<sequence length="423" mass="44707">MKDLTSSDADALIADLGQKARAAAAVLAEASAERKHAALIGAADAILEAEDAILDANAEDMHYAEEKGLSPAMLDRLKLDPARIRAMAEGLRSVAAQADPVGKVLAEWDRPNGLNIRRVATPLGVIGVVYESRPNVTADAAALALKAGNAVILRGGSESLNSSAAIHRALVTGLKQAGLPETAIQMVPTRDREAVAAMLRAQDYIDVIVPRGGKGLVGLVQKEARVPVFAHLEGICHVYADRDADLDKARRVVLNAKTRRTGICGAAECLLIDWQFYTKHGPVLVQDLLDAGVEVRAEGELAKVPGTVPAEPSDFGQEFLDKIIAVKLVDGVEEAIAHIRRHGSGHTESILTENDATAERFFSGLDSAILMRNASTQFADGGEFGMGAEIGIATGKMHARGPVGAEQLTSFKYLVTGDGTIRP</sequence>
<name>PROA_PARDP</name>
<proteinExistence type="inferred from homology"/>